<feature type="chain" id="PRO_1000000229" description="Ribosome-binding factor A">
    <location>
        <begin position="1"/>
        <end position="117"/>
    </location>
</feature>
<accession>Q03M87</accession>
<reference key="1">
    <citation type="journal article" date="2006" name="Proc. Natl. Acad. Sci. U.S.A.">
        <title>Comparative genomics of the lactic acid bacteria.</title>
        <authorList>
            <person name="Makarova K.S."/>
            <person name="Slesarev A."/>
            <person name="Wolf Y.I."/>
            <person name="Sorokin A."/>
            <person name="Mirkin B."/>
            <person name="Koonin E.V."/>
            <person name="Pavlov A."/>
            <person name="Pavlova N."/>
            <person name="Karamychev V."/>
            <person name="Polouchine N."/>
            <person name="Shakhova V."/>
            <person name="Grigoriev I."/>
            <person name="Lou Y."/>
            <person name="Rohksar D."/>
            <person name="Lucas S."/>
            <person name="Huang K."/>
            <person name="Goodstein D.M."/>
            <person name="Hawkins T."/>
            <person name="Plengvidhya V."/>
            <person name="Welker D."/>
            <person name="Hughes J."/>
            <person name="Goh Y."/>
            <person name="Benson A."/>
            <person name="Baldwin K."/>
            <person name="Lee J.-H."/>
            <person name="Diaz-Muniz I."/>
            <person name="Dosti B."/>
            <person name="Smeianov V."/>
            <person name="Wechter W."/>
            <person name="Barabote R."/>
            <person name="Lorca G."/>
            <person name="Altermann E."/>
            <person name="Barrangou R."/>
            <person name="Ganesan B."/>
            <person name="Xie Y."/>
            <person name="Rawsthorne H."/>
            <person name="Tamir D."/>
            <person name="Parker C."/>
            <person name="Breidt F."/>
            <person name="Broadbent J.R."/>
            <person name="Hutkins R."/>
            <person name="O'Sullivan D."/>
            <person name="Steele J."/>
            <person name="Unlu G."/>
            <person name="Saier M.H. Jr."/>
            <person name="Klaenhammer T."/>
            <person name="Richardson P."/>
            <person name="Kozyavkin S."/>
            <person name="Weimer B.C."/>
            <person name="Mills D.A."/>
        </authorList>
    </citation>
    <scope>NUCLEOTIDE SEQUENCE [LARGE SCALE GENOMIC DNA]</scope>
    <source>
        <strain>ATCC BAA-491 / LMD-9</strain>
    </source>
</reference>
<protein>
    <recommendedName>
        <fullName evidence="1">Ribosome-binding factor A</fullName>
    </recommendedName>
</protein>
<gene>
    <name evidence="1" type="primary">rbfA</name>
    <name type="ordered locus">STER_0384</name>
</gene>
<name>RBFA_STRTD</name>
<dbReference type="EMBL" id="CP000419">
    <property type="protein sequence ID" value="ABJ65685.1"/>
    <property type="molecule type" value="Genomic_DNA"/>
</dbReference>
<dbReference type="RefSeq" id="WP_002949692.1">
    <property type="nucleotide sequence ID" value="NZ_CP086001.1"/>
</dbReference>
<dbReference type="SMR" id="Q03M87"/>
<dbReference type="GeneID" id="66898262"/>
<dbReference type="KEGG" id="ste:STER_0384"/>
<dbReference type="HOGENOM" id="CLU_089475_3_0_9"/>
<dbReference type="GO" id="GO:0005829">
    <property type="term" value="C:cytosol"/>
    <property type="evidence" value="ECO:0007669"/>
    <property type="project" value="TreeGrafter"/>
</dbReference>
<dbReference type="GO" id="GO:0043024">
    <property type="term" value="F:ribosomal small subunit binding"/>
    <property type="evidence" value="ECO:0007669"/>
    <property type="project" value="TreeGrafter"/>
</dbReference>
<dbReference type="GO" id="GO:0030490">
    <property type="term" value="P:maturation of SSU-rRNA"/>
    <property type="evidence" value="ECO:0007669"/>
    <property type="project" value="UniProtKB-UniRule"/>
</dbReference>
<dbReference type="Gene3D" id="3.30.300.20">
    <property type="match status" value="1"/>
</dbReference>
<dbReference type="HAMAP" id="MF_00003">
    <property type="entry name" value="RbfA"/>
    <property type="match status" value="1"/>
</dbReference>
<dbReference type="InterPro" id="IPR015946">
    <property type="entry name" value="KH_dom-like_a/b"/>
</dbReference>
<dbReference type="InterPro" id="IPR000238">
    <property type="entry name" value="RbfA"/>
</dbReference>
<dbReference type="InterPro" id="IPR023799">
    <property type="entry name" value="RbfA_dom_sf"/>
</dbReference>
<dbReference type="InterPro" id="IPR020053">
    <property type="entry name" value="Ribosome-bd_factorA_CS"/>
</dbReference>
<dbReference type="NCBIfam" id="TIGR00082">
    <property type="entry name" value="rbfA"/>
    <property type="match status" value="1"/>
</dbReference>
<dbReference type="PANTHER" id="PTHR33515">
    <property type="entry name" value="RIBOSOME-BINDING FACTOR A, CHLOROPLASTIC-RELATED"/>
    <property type="match status" value="1"/>
</dbReference>
<dbReference type="PANTHER" id="PTHR33515:SF1">
    <property type="entry name" value="RIBOSOME-BINDING FACTOR A, CHLOROPLASTIC-RELATED"/>
    <property type="match status" value="1"/>
</dbReference>
<dbReference type="Pfam" id="PF02033">
    <property type="entry name" value="RBFA"/>
    <property type="match status" value="1"/>
</dbReference>
<dbReference type="SUPFAM" id="SSF89919">
    <property type="entry name" value="Ribosome-binding factor A, RbfA"/>
    <property type="match status" value="1"/>
</dbReference>
<dbReference type="PROSITE" id="PS01319">
    <property type="entry name" value="RBFA"/>
    <property type="match status" value="1"/>
</dbReference>
<proteinExistence type="inferred from homology"/>
<sequence>MGNSFRVDRVGMEIKREVNEILQKKVRDPRVQNVTITDVQMLGDLSAAKVFYTIHSTLASDNQKAQTGLEKATGTIKRELGKNLTMYKIPDLIFIKDESIEYGNKIDEMLRNLERKD</sequence>
<organism>
    <name type="scientific">Streptococcus thermophilus (strain ATCC BAA-491 / LMD-9)</name>
    <dbReference type="NCBI Taxonomy" id="322159"/>
    <lineage>
        <taxon>Bacteria</taxon>
        <taxon>Bacillati</taxon>
        <taxon>Bacillota</taxon>
        <taxon>Bacilli</taxon>
        <taxon>Lactobacillales</taxon>
        <taxon>Streptococcaceae</taxon>
        <taxon>Streptococcus</taxon>
    </lineage>
</organism>
<evidence type="ECO:0000255" key="1">
    <source>
        <dbReference type="HAMAP-Rule" id="MF_00003"/>
    </source>
</evidence>
<keyword id="KW-0963">Cytoplasm</keyword>
<keyword id="KW-0690">Ribosome biogenesis</keyword>
<comment type="function">
    <text evidence="1">One of several proteins that assist in the late maturation steps of the functional core of the 30S ribosomal subunit. Associates with free 30S ribosomal subunits (but not with 30S subunits that are part of 70S ribosomes or polysomes). Required for efficient processing of 16S rRNA. May interact with the 5'-terminal helix region of 16S rRNA.</text>
</comment>
<comment type="subunit">
    <text evidence="1">Monomer. Binds 30S ribosomal subunits, but not 50S ribosomal subunits or 70S ribosomes.</text>
</comment>
<comment type="subcellular location">
    <subcellularLocation>
        <location evidence="1">Cytoplasm</location>
    </subcellularLocation>
</comment>
<comment type="similarity">
    <text evidence="1">Belongs to the RbfA family.</text>
</comment>